<name>TRI33_DANRE</name>
<organism>
    <name type="scientific">Danio rerio</name>
    <name type="common">Zebrafish</name>
    <name type="synonym">Brachydanio rerio</name>
    <dbReference type="NCBI Taxonomy" id="7955"/>
    <lineage>
        <taxon>Eukaryota</taxon>
        <taxon>Metazoa</taxon>
        <taxon>Chordata</taxon>
        <taxon>Craniata</taxon>
        <taxon>Vertebrata</taxon>
        <taxon>Euteleostomi</taxon>
        <taxon>Actinopterygii</taxon>
        <taxon>Neopterygii</taxon>
        <taxon>Teleostei</taxon>
        <taxon>Ostariophysi</taxon>
        <taxon>Cypriniformes</taxon>
        <taxon>Danionidae</taxon>
        <taxon>Danioninae</taxon>
        <taxon>Danio</taxon>
    </lineage>
</organism>
<evidence type="ECO:0000250" key="1"/>
<evidence type="ECO:0000255" key="2"/>
<evidence type="ECO:0000255" key="3">
    <source>
        <dbReference type="PROSITE-ProRule" id="PRU00024"/>
    </source>
</evidence>
<evidence type="ECO:0000255" key="4">
    <source>
        <dbReference type="PROSITE-ProRule" id="PRU00035"/>
    </source>
</evidence>
<evidence type="ECO:0000255" key="5">
    <source>
        <dbReference type="PROSITE-ProRule" id="PRU00146"/>
    </source>
</evidence>
<evidence type="ECO:0000255" key="6">
    <source>
        <dbReference type="PROSITE-ProRule" id="PRU00175"/>
    </source>
</evidence>
<evidence type="ECO:0000256" key="7">
    <source>
        <dbReference type="SAM" id="MobiDB-lite"/>
    </source>
</evidence>
<evidence type="ECO:0000269" key="8">
    <source>
    </source>
</evidence>
<evidence type="ECO:0000303" key="9">
    <source ref="2"/>
</evidence>
<evidence type="ECO:0000305" key="10"/>
<keyword id="KW-0025">Alternative splicing</keyword>
<keyword id="KW-0103">Bromodomain</keyword>
<keyword id="KW-0175">Coiled coil</keyword>
<keyword id="KW-0238">DNA-binding</keyword>
<keyword id="KW-0479">Metal-binding</keyword>
<keyword id="KW-0539">Nucleus</keyword>
<keyword id="KW-1185">Reference proteome</keyword>
<keyword id="KW-0677">Repeat</keyword>
<keyword id="KW-0678">Repressor</keyword>
<keyword id="KW-0804">Transcription</keyword>
<keyword id="KW-0805">Transcription regulation</keyword>
<keyword id="KW-0808">Transferase</keyword>
<keyword id="KW-0833">Ubl conjugation pathway</keyword>
<keyword id="KW-0862">Zinc</keyword>
<keyword id="KW-0863">Zinc-finger</keyword>
<comment type="function">
    <text evidence="1 8">May act as an E3 ubiquitin-protein ligase and a transcriptional repressor (By similarity). Involved in the regulation of embryonic and adult hematopoiesis. Required for normal development and survival of both committed erythroid progenitor cells and posterior mesenchymal cells.</text>
</comment>
<comment type="catalytic activity">
    <reaction>
        <text>S-ubiquitinyl-[E2 ubiquitin-conjugating enzyme]-L-cysteine + [acceptor protein]-L-lysine = [E2 ubiquitin-conjugating enzyme]-L-cysteine + N(6)-ubiquitinyl-[acceptor protein]-L-lysine.</text>
        <dbReference type="EC" id="2.3.2.27"/>
    </reaction>
</comment>
<comment type="pathway">
    <text>Protein modification; protein ubiquitination.</text>
</comment>
<comment type="subcellular location">
    <subcellularLocation>
        <location evidence="8">Nucleus</location>
    </subcellularLocation>
</comment>
<comment type="alternative products">
    <event type="alternative splicing"/>
    <isoform>
        <id>Q6E2N3-1</id>
        <name>1</name>
        <sequence type="displayed"/>
    </isoform>
    <isoform>
        <id>Q6E2N3-2</id>
        <name>2</name>
        <sequence type="described" ref="VSP_025397"/>
    </isoform>
</comment>
<comment type="developmental stage">
    <text evidence="8">Expressed both maternally and throughout the embryo during blastula stage. During gastrulation and epiboly stages, strongly expressed in the mesendoderm of the germ ring. Expressed at the tail bud and in early somite stages in a horseshoeshaped population of ventral/lateral mesoderm cells that will give rise to blood. Detected in ventral-lateral mesoderm between the one- to three-somite stages and increases through early development. Expressed in lateral stripes of mesoderm at five somites. Expressed broadly in the brain, spinal cord, trunk, and tail mesenchyme, but is at much higher levels in hematopoietic cells of the blood island at 24-72 hours post-fertilization (hpf).</text>
</comment>
<gene>
    <name type="primary">trim33</name>
    <name type="synonym">mon</name>
</gene>
<sequence>MEVEASGTEDNGDGGAKEPEAVVSIDTETKEAADEAKSQETVPQTPTTSSDSSSSGGGGEATDGTPNAESADPPPPPPPPPPPPPSTPADSTAAAASPAVLTEMSPPPPASTSSSSSTPAAPINLLDTCAVCKQSLQNRDCEPKLLPCLHSFCLKCIPQPDRKITMPVQGPHGQDTRIVNVMRCTVCHQDYKQIDMVDNYFVKDTSEATNTSVENSTQVCTSCEDNASAIGFCVECGEWLCKTCIEAHQRVKFTKDHKIRKKEEVSPESVGTSGQRPVFCPVHKQEALKLFCETCDTLTCRDCQLLEHKEHRYQFLDEACQNQKGIIATFMTKLQEKRGLVEYSASEVQKRLKEVAETHKKVEHEIKIAVFTLINEINKKGKSLLQQLESVTKDRSMKLLSQQRDISVLAQQIIHVLNFTNWAITNGSSTALLYSKRLITYQLRLIMKARVDAVPPANGAVRFFCDPTFWAKNVVNLGNLVIEKVAPTAPPSNMMVNQQISPGHNHPGKHSGQINLAQLRLQHMQQAAIAQKHQQQHQHHQQQQHQHQHQQQQQQQQQQQQQQQQQQQQQQHQQQIQQQMRIASQMSQHPRQGAPQMIQQPPPRLISMQALHRGGVNGSSHMFPPHHLRMVSAQNRMPSAQPRLNGQPYPMMQPQLQRQHSNPGHAGPFPVASLHNISAANPTSPTSASMANAHMHRGPSSPVITPIELIPSVTNPENLPCLPDIPPIQLEDAGSSTLDNILSRYISANAYPTVGPTNPSPGPSTHSPGSSGLSNSHTPARPSSTSSTGSRGSSGTTVDQVKVKQEPGVEEECSYSGANVKTERTKDGRRSACMMSSPEGSLTPPLPILGSVSTGSVQDILRTLGENVKSEPQSDNLSSCTNPNSRATLTNGTSGSNGGQRGGATNANSQTTAGKEDDPNEDWCAVCQNGGELLCCDHCPKVFHITCHIPTLKSSPSGDWMCTFCRNLANPEIEYNCDDDPPRNKEKNEMAMSPEEQRRCERLLLHVFCHELSTEFQEPVPTSVPNYYKIIKHPMDLTLVKRKLQRKHPLHYKSPKEFVSDVRLVFSNCAKYNEMSRIIQVYDEEKQSNVQADSEVAEAGKAVSLYFEERLLEIFPEQTFPVVMEKETQIEAEKEDSDDSDDDIIQPKRKRLKVDTEMLLHIK</sequence>
<accession>Q6E2N3</accession>
<accession>Q29RE2</accession>
<proteinExistence type="evidence at transcript level"/>
<dbReference type="EC" id="2.3.2.27"/>
<dbReference type="EMBL" id="AY598453">
    <property type="protein sequence ID" value="AAT70732.1"/>
    <property type="molecule type" value="mRNA"/>
</dbReference>
<dbReference type="EMBL" id="BC114245">
    <property type="protein sequence ID" value="AAI14246.1"/>
    <property type="molecule type" value="mRNA"/>
</dbReference>
<dbReference type="SMR" id="Q6E2N3"/>
<dbReference type="FunCoup" id="Q6E2N3">
    <property type="interactions" value="2090"/>
</dbReference>
<dbReference type="STRING" id="7955.ENSDARP00000025140"/>
<dbReference type="PaxDb" id="7955-ENSDARP00000025140"/>
<dbReference type="AGR" id="ZFIN:ZDB-GENE-030131-2773"/>
<dbReference type="ZFIN" id="ZDB-GENE-030131-2773">
    <property type="gene designation" value="trim33"/>
</dbReference>
<dbReference type="eggNOG" id="KOG2177">
    <property type="taxonomic scope" value="Eukaryota"/>
</dbReference>
<dbReference type="InParanoid" id="Q6E2N3"/>
<dbReference type="PhylomeDB" id="Q6E2N3"/>
<dbReference type="UniPathway" id="UPA00143"/>
<dbReference type="PRO" id="PR:Q6E2N3"/>
<dbReference type="Proteomes" id="UP000000437">
    <property type="component" value="Unplaced"/>
</dbReference>
<dbReference type="GO" id="GO:0000785">
    <property type="term" value="C:chromatin"/>
    <property type="evidence" value="ECO:0000318"/>
    <property type="project" value="GO_Central"/>
</dbReference>
<dbReference type="GO" id="GO:0005634">
    <property type="term" value="C:nucleus"/>
    <property type="evidence" value="ECO:0007669"/>
    <property type="project" value="UniProtKB-SubCell"/>
</dbReference>
<dbReference type="GO" id="GO:0003677">
    <property type="term" value="F:DNA binding"/>
    <property type="evidence" value="ECO:0007669"/>
    <property type="project" value="UniProtKB-KW"/>
</dbReference>
<dbReference type="GO" id="GO:0016740">
    <property type="term" value="F:transferase activity"/>
    <property type="evidence" value="ECO:0007669"/>
    <property type="project" value="UniProtKB-KW"/>
</dbReference>
<dbReference type="GO" id="GO:0008270">
    <property type="term" value="F:zinc ion binding"/>
    <property type="evidence" value="ECO:0007669"/>
    <property type="project" value="UniProtKB-KW"/>
</dbReference>
<dbReference type="GO" id="GO:0048066">
    <property type="term" value="P:developmental pigmentation"/>
    <property type="evidence" value="ECO:0000315"/>
    <property type="project" value="ZFIN"/>
</dbReference>
<dbReference type="GO" id="GO:0035162">
    <property type="term" value="P:embryonic hemopoiesis"/>
    <property type="evidence" value="ECO:0000315"/>
    <property type="project" value="ZFIN"/>
</dbReference>
<dbReference type="GO" id="GO:0030218">
    <property type="term" value="P:erythrocyte differentiation"/>
    <property type="evidence" value="ECO:0000315"/>
    <property type="project" value="ZFIN"/>
</dbReference>
<dbReference type="GO" id="GO:0033333">
    <property type="term" value="P:fin development"/>
    <property type="evidence" value="ECO:0000315"/>
    <property type="project" value="ZFIN"/>
</dbReference>
<dbReference type="GO" id="GO:0048246">
    <property type="term" value="P:macrophage chemotaxis"/>
    <property type="evidence" value="ECO:0000315"/>
    <property type="project" value="ZFIN"/>
</dbReference>
<dbReference type="GO" id="GO:1905517">
    <property type="term" value="P:macrophage migration"/>
    <property type="evidence" value="ECO:0000315"/>
    <property type="project" value="ZFIN"/>
</dbReference>
<dbReference type="GO" id="GO:0030593">
    <property type="term" value="P:neutrophil chemotaxis"/>
    <property type="evidence" value="ECO:0000315"/>
    <property type="project" value="ZFIN"/>
</dbReference>
<dbReference type="GO" id="GO:1990266">
    <property type="term" value="P:neutrophil migration"/>
    <property type="evidence" value="ECO:0000315"/>
    <property type="project" value="ZFIN"/>
</dbReference>
<dbReference type="GO" id="GO:0035166">
    <property type="term" value="P:post-embryonic hemopoiesis"/>
    <property type="evidence" value="ECO:0000315"/>
    <property type="project" value="ZFIN"/>
</dbReference>
<dbReference type="GO" id="GO:0060215">
    <property type="term" value="P:primitive hemopoiesis"/>
    <property type="evidence" value="ECO:0000315"/>
    <property type="project" value="ZFIN"/>
</dbReference>
<dbReference type="GO" id="GO:0016567">
    <property type="term" value="P:protein ubiquitination"/>
    <property type="evidence" value="ECO:0007669"/>
    <property type="project" value="UniProtKB-UniPathway"/>
</dbReference>
<dbReference type="GO" id="GO:0034243">
    <property type="term" value="P:regulation of transcription elongation by RNA polymerase II"/>
    <property type="evidence" value="ECO:0000316"/>
    <property type="project" value="ZFIN"/>
</dbReference>
<dbReference type="CDD" id="cd19847">
    <property type="entry name" value="Bbox1_TIF1g_C-VI"/>
    <property type="match status" value="1"/>
</dbReference>
<dbReference type="CDD" id="cd19830">
    <property type="entry name" value="Bbox2_TIF1g_C-VI"/>
    <property type="match status" value="1"/>
</dbReference>
<dbReference type="CDD" id="cd05502">
    <property type="entry name" value="Bromo_tif1_like"/>
    <property type="match status" value="1"/>
</dbReference>
<dbReference type="CDD" id="cd15541">
    <property type="entry name" value="PHD_TIF1_like"/>
    <property type="match status" value="1"/>
</dbReference>
<dbReference type="CDD" id="cd16766">
    <property type="entry name" value="RING-HC_TIF1gamma"/>
    <property type="match status" value="1"/>
</dbReference>
<dbReference type="FunFam" id="3.30.40.10:FF:000123">
    <property type="entry name" value="E3 ubiquitin-protein ligase TRIM33"/>
    <property type="match status" value="1"/>
</dbReference>
<dbReference type="FunFam" id="3.30.40.10:FF:000246">
    <property type="entry name" value="E3 ubiquitin-protein ligase TRIM33 isoform X2"/>
    <property type="match status" value="1"/>
</dbReference>
<dbReference type="FunFam" id="3.30.160.60:FF:000074">
    <property type="entry name" value="Tripartite motif containing 66"/>
    <property type="match status" value="1"/>
</dbReference>
<dbReference type="Gene3D" id="1.20.920.10">
    <property type="entry name" value="Bromodomain-like"/>
    <property type="match status" value="1"/>
</dbReference>
<dbReference type="Gene3D" id="3.30.160.60">
    <property type="entry name" value="Classic Zinc Finger"/>
    <property type="match status" value="1"/>
</dbReference>
<dbReference type="Gene3D" id="3.30.40.10">
    <property type="entry name" value="Zinc/RING finger domain, C3HC4 (zinc finger)"/>
    <property type="match status" value="2"/>
</dbReference>
<dbReference type="InterPro" id="IPR003649">
    <property type="entry name" value="Bbox_C"/>
</dbReference>
<dbReference type="InterPro" id="IPR001487">
    <property type="entry name" value="Bromodomain"/>
</dbReference>
<dbReference type="InterPro" id="IPR036427">
    <property type="entry name" value="Bromodomain-like_sf"/>
</dbReference>
<dbReference type="InterPro" id="IPR019786">
    <property type="entry name" value="Zinc_finger_PHD-type_CS"/>
</dbReference>
<dbReference type="InterPro" id="IPR000315">
    <property type="entry name" value="Znf_B-box"/>
</dbReference>
<dbReference type="InterPro" id="IPR011011">
    <property type="entry name" value="Znf_FYVE_PHD"/>
</dbReference>
<dbReference type="InterPro" id="IPR001965">
    <property type="entry name" value="Znf_PHD"/>
</dbReference>
<dbReference type="InterPro" id="IPR019787">
    <property type="entry name" value="Znf_PHD-finger"/>
</dbReference>
<dbReference type="InterPro" id="IPR001841">
    <property type="entry name" value="Znf_RING"/>
</dbReference>
<dbReference type="InterPro" id="IPR013083">
    <property type="entry name" value="Znf_RING/FYVE/PHD"/>
</dbReference>
<dbReference type="InterPro" id="IPR017907">
    <property type="entry name" value="Znf_RING_CS"/>
</dbReference>
<dbReference type="PANTHER" id="PTHR45915:SF3">
    <property type="entry name" value="E3 UBIQUITIN-PROTEIN LIGASE TRIM33"/>
    <property type="match status" value="1"/>
</dbReference>
<dbReference type="PANTHER" id="PTHR45915">
    <property type="entry name" value="TRANSCRIPTION INTERMEDIARY FACTOR"/>
    <property type="match status" value="1"/>
</dbReference>
<dbReference type="Pfam" id="PF00439">
    <property type="entry name" value="Bromodomain"/>
    <property type="match status" value="1"/>
</dbReference>
<dbReference type="Pfam" id="PF00628">
    <property type="entry name" value="PHD"/>
    <property type="match status" value="1"/>
</dbReference>
<dbReference type="Pfam" id="PF00643">
    <property type="entry name" value="zf-B_box"/>
    <property type="match status" value="1"/>
</dbReference>
<dbReference type="SMART" id="SM00502">
    <property type="entry name" value="BBC"/>
    <property type="match status" value="1"/>
</dbReference>
<dbReference type="SMART" id="SM00336">
    <property type="entry name" value="BBOX"/>
    <property type="match status" value="2"/>
</dbReference>
<dbReference type="SMART" id="SM00297">
    <property type="entry name" value="BROMO"/>
    <property type="match status" value="1"/>
</dbReference>
<dbReference type="SMART" id="SM00249">
    <property type="entry name" value="PHD"/>
    <property type="match status" value="1"/>
</dbReference>
<dbReference type="SMART" id="SM00184">
    <property type="entry name" value="RING"/>
    <property type="match status" value="2"/>
</dbReference>
<dbReference type="SUPFAM" id="SSF57845">
    <property type="entry name" value="B-box zinc-binding domain"/>
    <property type="match status" value="1"/>
</dbReference>
<dbReference type="SUPFAM" id="SSF47370">
    <property type="entry name" value="Bromodomain"/>
    <property type="match status" value="1"/>
</dbReference>
<dbReference type="SUPFAM" id="SSF57903">
    <property type="entry name" value="FYVE/PHD zinc finger"/>
    <property type="match status" value="1"/>
</dbReference>
<dbReference type="SUPFAM" id="SSF57850">
    <property type="entry name" value="RING/U-box"/>
    <property type="match status" value="1"/>
</dbReference>
<dbReference type="PROSITE" id="PS50014">
    <property type="entry name" value="BROMODOMAIN_2"/>
    <property type="match status" value="1"/>
</dbReference>
<dbReference type="PROSITE" id="PS50119">
    <property type="entry name" value="ZF_BBOX"/>
    <property type="match status" value="2"/>
</dbReference>
<dbReference type="PROSITE" id="PS01359">
    <property type="entry name" value="ZF_PHD_1"/>
    <property type="match status" value="1"/>
</dbReference>
<dbReference type="PROSITE" id="PS50016">
    <property type="entry name" value="ZF_PHD_2"/>
    <property type="match status" value="1"/>
</dbReference>
<dbReference type="PROSITE" id="PS00518">
    <property type="entry name" value="ZF_RING_1"/>
    <property type="match status" value="1"/>
</dbReference>
<dbReference type="PROSITE" id="PS50089">
    <property type="entry name" value="ZF_RING_2"/>
    <property type="match status" value="1"/>
</dbReference>
<protein>
    <recommendedName>
        <fullName>E3 ubiquitin-protein ligase TRIM33</fullName>
        <ecNumber>2.3.2.27</ecNumber>
    </recommendedName>
    <alternativeName>
        <fullName>Ectodermin homolog</fullName>
    </alternativeName>
    <alternativeName>
        <fullName>Protein moonshine</fullName>
    </alternativeName>
    <alternativeName>
        <fullName evidence="10">RING-type E3 ubiquitin transferase TRIM33</fullName>
    </alternativeName>
    <alternativeName>
        <fullName>Transcription intermediary factor 1-gamma</fullName>
        <shortName>TIF1-gamma</shortName>
    </alternativeName>
    <alternativeName>
        <fullName>Tripartite motif-containing protein 33</fullName>
    </alternativeName>
</protein>
<reference key="1">
    <citation type="journal article" date="2004" name="PLoS Biol.">
        <title>The zebrafish moonshine gene encodes transcriptional intermediary factor 1 gamma, an essential regulator of hematopoiesis.</title>
        <authorList>
            <person name="Ransom D.G."/>
            <person name="Bahary N."/>
            <person name="Niss K."/>
            <person name="Traver D."/>
            <person name="Burns C."/>
            <person name="Trede N.S."/>
            <person name="Paffett-Lugassy N."/>
            <person name="Saganic W.J."/>
            <person name="Lim C.A."/>
            <person name="Hersey C."/>
            <person name="Zhou Y."/>
            <person name="Barut B.A."/>
            <person name="Lin S."/>
            <person name="Kingsley P.D."/>
            <person name="Palis J."/>
            <person name="Orkin S.H."/>
            <person name="Zon L.I."/>
        </authorList>
    </citation>
    <scope>NUCLEOTIDE SEQUENCE [MRNA] (ISOFORM 1)</scope>
    <scope>FUNCTION</scope>
    <scope>SUBCELLULAR LOCATION</scope>
    <scope>DEVELOPMENTAL STAGE</scope>
    <source>
        <tissue>Kidney marrow</tissue>
    </source>
</reference>
<reference key="2">
    <citation type="submission" date="2006-03" db="EMBL/GenBank/DDBJ databases">
        <authorList>
            <consortium name="NIH - Zebrafish Gene Collection (ZGC) project"/>
        </authorList>
    </citation>
    <scope>NUCLEOTIDE SEQUENCE [LARGE SCALE MRNA] (ISOFORM 2)</scope>
</reference>
<feature type="chain" id="PRO_0000287227" description="E3 ubiquitin-protein ligase TRIM33">
    <location>
        <begin position="1"/>
        <end position="1163"/>
    </location>
</feature>
<feature type="domain" description="Bromo" evidence="4">
    <location>
        <begin position="991"/>
        <end position="1114"/>
    </location>
</feature>
<feature type="zinc finger region" description="RING-type" evidence="6">
    <location>
        <begin position="129"/>
        <end position="188"/>
    </location>
</feature>
<feature type="zinc finger region" description="B box-type 1; atypical" evidence="3">
    <location>
        <begin position="215"/>
        <end position="268"/>
    </location>
</feature>
<feature type="zinc finger region" description="B box-type 2" evidence="3">
    <location>
        <begin position="275"/>
        <end position="316"/>
    </location>
</feature>
<feature type="zinc finger region" description="PHD-type" evidence="5">
    <location>
        <begin position="921"/>
        <end position="968"/>
    </location>
</feature>
<feature type="region of interest" description="Disordered" evidence="7">
    <location>
        <begin position="1"/>
        <end position="119"/>
    </location>
</feature>
<feature type="region of interest" description="Disordered" evidence="7">
    <location>
        <begin position="524"/>
        <end position="555"/>
    </location>
</feature>
<feature type="region of interest" description="Disordered" evidence="7">
    <location>
        <begin position="575"/>
        <end position="599"/>
    </location>
</feature>
<feature type="region of interest" description="Disordered" evidence="7">
    <location>
        <begin position="656"/>
        <end position="706"/>
    </location>
</feature>
<feature type="region of interest" description="Disordered" evidence="7">
    <location>
        <begin position="753"/>
        <end position="848"/>
    </location>
</feature>
<feature type="region of interest" description="Disordered" evidence="7">
    <location>
        <begin position="867"/>
        <end position="918"/>
    </location>
</feature>
<feature type="region of interest" description="Disordered" evidence="7">
    <location>
        <begin position="1128"/>
        <end position="1147"/>
    </location>
</feature>
<feature type="coiled-coil region" evidence="2">
    <location>
        <begin position="345"/>
        <end position="369"/>
    </location>
</feature>
<feature type="compositionally biased region" description="Basic and acidic residues" evidence="7">
    <location>
        <begin position="27"/>
        <end position="38"/>
    </location>
</feature>
<feature type="compositionally biased region" description="Low complexity" evidence="7">
    <location>
        <begin position="45"/>
        <end position="54"/>
    </location>
</feature>
<feature type="compositionally biased region" description="Pro residues" evidence="7">
    <location>
        <begin position="72"/>
        <end position="87"/>
    </location>
</feature>
<feature type="compositionally biased region" description="Low complexity" evidence="7">
    <location>
        <begin position="88"/>
        <end position="99"/>
    </location>
</feature>
<feature type="compositionally biased region" description="Low complexity" evidence="7">
    <location>
        <begin position="524"/>
        <end position="533"/>
    </location>
</feature>
<feature type="compositionally biased region" description="Basic residues" evidence="7">
    <location>
        <begin position="534"/>
        <end position="548"/>
    </location>
</feature>
<feature type="compositionally biased region" description="Polar residues" evidence="7">
    <location>
        <begin position="580"/>
        <end position="590"/>
    </location>
</feature>
<feature type="compositionally biased region" description="Low complexity" evidence="7">
    <location>
        <begin position="678"/>
        <end position="691"/>
    </location>
</feature>
<feature type="compositionally biased region" description="Low complexity" evidence="7">
    <location>
        <begin position="753"/>
        <end position="797"/>
    </location>
</feature>
<feature type="compositionally biased region" description="Basic and acidic residues" evidence="7">
    <location>
        <begin position="821"/>
        <end position="830"/>
    </location>
</feature>
<feature type="compositionally biased region" description="Polar residues" evidence="7">
    <location>
        <begin position="870"/>
        <end position="889"/>
    </location>
</feature>
<feature type="compositionally biased region" description="Acidic residues" evidence="7">
    <location>
        <begin position="1133"/>
        <end position="1144"/>
    </location>
</feature>
<feature type="binding site" evidence="3">
    <location>
        <position position="220"/>
    </location>
    <ligand>
        <name>Zn(2+)</name>
        <dbReference type="ChEBI" id="CHEBI:29105"/>
        <label>1</label>
    </ligand>
</feature>
<feature type="binding site" evidence="3">
    <location>
        <position position="223"/>
    </location>
    <ligand>
        <name>Zn(2+)</name>
        <dbReference type="ChEBI" id="CHEBI:29105"/>
        <label>1</label>
    </ligand>
</feature>
<feature type="binding site" evidence="3">
    <location>
        <position position="244"/>
    </location>
    <ligand>
        <name>Zn(2+)</name>
        <dbReference type="ChEBI" id="CHEBI:29105"/>
        <label>1</label>
    </ligand>
</feature>
<feature type="binding site" evidence="3">
    <location>
        <position position="257"/>
    </location>
    <ligand>
        <name>Zn(2+)</name>
        <dbReference type="ChEBI" id="CHEBI:29105"/>
        <label>1</label>
    </ligand>
</feature>
<feature type="binding site" evidence="3">
    <location>
        <position position="280"/>
    </location>
    <ligand>
        <name>Zn(2+)</name>
        <dbReference type="ChEBI" id="CHEBI:29105"/>
        <label>2</label>
    </ligand>
</feature>
<feature type="binding site" evidence="3">
    <location>
        <position position="283"/>
    </location>
    <ligand>
        <name>Zn(2+)</name>
        <dbReference type="ChEBI" id="CHEBI:29105"/>
        <label>2</label>
    </ligand>
</feature>
<feature type="binding site" evidence="3">
    <location>
        <position position="303"/>
    </location>
    <ligand>
        <name>Zn(2+)</name>
        <dbReference type="ChEBI" id="CHEBI:29105"/>
        <label>2</label>
    </ligand>
</feature>
<feature type="binding site" evidence="3">
    <location>
        <position position="308"/>
    </location>
    <ligand>
        <name>Zn(2+)</name>
        <dbReference type="ChEBI" id="CHEBI:29105"/>
        <label>2</label>
    </ligand>
</feature>
<feature type="splice variant" id="VSP_025397" description="In isoform 2." evidence="9">
    <location>
        <begin position="1"/>
        <end position="103"/>
    </location>
</feature>
<feature type="sequence conflict" description="In Ref. 2; AAI14246." evidence="10" ref="2">
    <location>
        <begin position="544"/>
        <end position="545"/>
    </location>
</feature>
<feature type="sequence conflict" description="In Ref. 2; AAI14246." evidence="10" ref="2">
    <original>S</original>
    <variation>T</variation>
    <location>
        <position position="816"/>
    </location>
</feature>
<feature type="sequence conflict" description="In Ref. 2; AAI14246." evidence="10" ref="2">
    <original>A</original>
    <variation>T</variation>
    <location>
        <position position="904"/>
    </location>
</feature>
<feature type="sequence conflict" description="In Ref. 2; AAI14246." evidence="10" ref="2">
    <original>E</original>
    <variation>G</variation>
    <location>
        <position position="1084"/>
    </location>
</feature>